<sequence>MSDVEEVVEVQEETVVEQTAEVTIEDALKVVLRTALVHDGLARGLRESTKALTRGEALLVVLVSSVTEANIIKLVEGLANDPENKVPLIKVADAKQLGEWAGLGKIDREGNARKVVGASVVVVKNWGAETDELSMIMEHFSQQ</sequence>
<evidence type="ECO:0000269" key="1">
    <source>
    </source>
</evidence>
<evidence type="ECO:0000303" key="2">
    <source>
    </source>
</evidence>
<evidence type="ECO:0000303" key="3">
    <source>
    </source>
</evidence>
<evidence type="ECO:0000305" key="4"/>
<evidence type="ECO:0000305" key="5">
    <source>
    </source>
</evidence>
<evidence type="ECO:0000305" key="6">
    <source>
    </source>
</evidence>
<evidence type="ECO:0007744" key="7">
    <source>
    </source>
</evidence>
<evidence type="ECO:0007829" key="8">
    <source>
        <dbReference type="PDB" id="6FAI"/>
    </source>
</evidence>
<evidence type="ECO:0007829" key="9">
    <source>
        <dbReference type="PDB" id="6RBD"/>
    </source>
</evidence>
<evidence type="ECO:0007829" key="10">
    <source>
        <dbReference type="PDB" id="6ZVI"/>
    </source>
</evidence>
<evidence type="ECO:0007829" key="11">
    <source>
        <dbReference type="PDB" id="7A1G"/>
    </source>
</evidence>
<feature type="chain" id="PRO_0000122340" description="Small ribosomal subunit protein eS12">
    <location>
        <begin position="1"/>
        <end position="143"/>
    </location>
</feature>
<feature type="cross-link" description="Glycyl lysine isopeptide (Lys-Gly) (interchain with G-Cter in ubiquitin)" evidence="7">
    <location>
        <position position="85"/>
    </location>
</feature>
<feature type="cross-link" description="Glycyl lysine isopeptide (Lys-Gly) (interchain with G-Cter in ubiquitin)" evidence="7">
    <location>
        <position position="95"/>
    </location>
</feature>
<feature type="cross-link" description="Glycyl lysine isopeptide (Lys-Gly) (interchain with G-Cter in ubiquitin)" evidence="7">
    <location>
        <position position="114"/>
    </location>
</feature>
<feature type="sequence conflict" description="In Ref. 2; AAA69926." evidence="4" ref="2">
    <original>KVA</original>
    <variation>EGLP</variation>
    <location>
        <begin position="90"/>
        <end position="92"/>
    </location>
</feature>
<feature type="helix" evidence="10">
    <location>
        <begin position="28"/>
        <end position="36"/>
    </location>
</feature>
<feature type="turn" evidence="10">
    <location>
        <begin position="37"/>
        <end position="39"/>
    </location>
</feature>
<feature type="strand" evidence="10">
    <location>
        <begin position="41"/>
        <end position="44"/>
    </location>
</feature>
<feature type="helix" evidence="10">
    <location>
        <begin position="45"/>
        <end position="52"/>
    </location>
</feature>
<feature type="turn" evidence="10">
    <location>
        <begin position="53"/>
        <end position="55"/>
    </location>
</feature>
<feature type="strand" evidence="10">
    <location>
        <begin position="59"/>
        <end position="61"/>
    </location>
</feature>
<feature type="turn" evidence="10">
    <location>
        <begin position="68"/>
        <end position="71"/>
    </location>
</feature>
<feature type="helix" evidence="10">
    <location>
        <begin position="72"/>
        <end position="79"/>
    </location>
</feature>
<feature type="turn" evidence="10">
    <location>
        <begin position="82"/>
        <end position="84"/>
    </location>
</feature>
<feature type="strand" evidence="11">
    <location>
        <begin position="89"/>
        <end position="92"/>
    </location>
</feature>
<feature type="helix" evidence="10">
    <location>
        <begin position="94"/>
        <end position="97"/>
    </location>
</feature>
<feature type="turn" evidence="10">
    <location>
        <begin position="98"/>
        <end position="102"/>
    </location>
</feature>
<feature type="turn" evidence="10">
    <location>
        <begin position="107"/>
        <end position="109"/>
    </location>
</feature>
<feature type="strand" evidence="8">
    <location>
        <begin position="111"/>
        <end position="114"/>
    </location>
</feature>
<feature type="strand" evidence="10">
    <location>
        <begin position="121"/>
        <end position="124"/>
    </location>
</feature>
<feature type="helix" evidence="9">
    <location>
        <begin position="127"/>
        <end position="129"/>
    </location>
</feature>
<feature type="helix" evidence="10">
    <location>
        <begin position="131"/>
        <end position="141"/>
    </location>
</feature>
<reference key="1">
    <citation type="journal article" date="1996" name="Nucleic Acids Res.">
        <title>Cloning and characterization of RAD17, a gene controlling cell cycle responses to DNA damage in Saccharomyces cerevisiae.</title>
        <authorList>
            <person name="Siede W."/>
            <person name="Nusspaumer G."/>
            <person name="Portillo V."/>
            <person name="Rodriguez R."/>
            <person name="Friedberg E.C."/>
        </authorList>
    </citation>
    <scope>NUCLEOTIDE SEQUENCE [GENOMIC DNA / MRNA]</scope>
</reference>
<reference key="2">
    <citation type="submission" date="1993-08" db="EMBL/GenBank/DDBJ databases">
        <title>Yeast homologue of ribosomal protein S12.</title>
        <authorList>
            <person name="Teply R."/>
        </authorList>
    </citation>
    <scope>NUCLEOTIDE SEQUENCE [GENOMIC DNA]</scope>
    <source>
        <strain>ATCC 44774 / DBY747</strain>
    </source>
</reference>
<reference key="3">
    <citation type="journal article" date="1997" name="Nature">
        <title>The nucleotide sequence of Saccharomyces cerevisiae chromosome XV.</title>
        <authorList>
            <person name="Dujon B."/>
            <person name="Albermann K."/>
            <person name="Aldea M."/>
            <person name="Alexandraki D."/>
            <person name="Ansorge W."/>
            <person name="Arino J."/>
            <person name="Benes V."/>
            <person name="Bohn C."/>
            <person name="Bolotin-Fukuhara M."/>
            <person name="Bordonne R."/>
            <person name="Boyer J."/>
            <person name="Camasses A."/>
            <person name="Casamayor A."/>
            <person name="Casas C."/>
            <person name="Cheret G."/>
            <person name="Cziepluch C."/>
            <person name="Daignan-Fornier B."/>
            <person name="Dang V.-D."/>
            <person name="de Haan M."/>
            <person name="Delius H."/>
            <person name="Durand P."/>
            <person name="Fairhead C."/>
            <person name="Feldmann H."/>
            <person name="Gaillon L."/>
            <person name="Galisson F."/>
            <person name="Gamo F.-J."/>
            <person name="Gancedo C."/>
            <person name="Goffeau A."/>
            <person name="Goulding S.E."/>
            <person name="Grivell L.A."/>
            <person name="Habbig B."/>
            <person name="Hand N.J."/>
            <person name="Hani J."/>
            <person name="Hattenhorst U."/>
            <person name="Hebling U."/>
            <person name="Hernando Y."/>
            <person name="Herrero E."/>
            <person name="Heumann K."/>
            <person name="Hiesel R."/>
            <person name="Hilger F."/>
            <person name="Hofmann B."/>
            <person name="Hollenberg C.P."/>
            <person name="Hughes B."/>
            <person name="Jauniaux J.-C."/>
            <person name="Kalogeropoulos A."/>
            <person name="Katsoulou C."/>
            <person name="Kordes E."/>
            <person name="Lafuente M.J."/>
            <person name="Landt O."/>
            <person name="Louis E.J."/>
            <person name="Maarse A.C."/>
            <person name="Madania A."/>
            <person name="Mannhaupt G."/>
            <person name="Marck C."/>
            <person name="Martin R.P."/>
            <person name="Mewes H.-W."/>
            <person name="Michaux G."/>
            <person name="Paces V."/>
            <person name="Parle-McDermott A.G."/>
            <person name="Pearson B.M."/>
            <person name="Perrin A."/>
            <person name="Pettersson B."/>
            <person name="Poch O."/>
            <person name="Pohl T.M."/>
            <person name="Poirey R."/>
            <person name="Portetelle D."/>
            <person name="Pujol A."/>
            <person name="Purnelle B."/>
            <person name="Ramezani Rad M."/>
            <person name="Rechmann S."/>
            <person name="Schwager C."/>
            <person name="Schweizer M."/>
            <person name="Sor F."/>
            <person name="Sterky F."/>
            <person name="Tarassov I.A."/>
            <person name="Teodoru C."/>
            <person name="Tettelin H."/>
            <person name="Thierry A."/>
            <person name="Tobiasch E."/>
            <person name="Tzermia M."/>
            <person name="Uhlen M."/>
            <person name="Unseld M."/>
            <person name="Valens M."/>
            <person name="Vandenbol M."/>
            <person name="Vetter I."/>
            <person name="Vlcek C."/>
            <person name="Voet M."/>
            <person name="Volckaert G."/>
            <person name="Voss H."/>
            <person name="Wambutt R."/>
            <person name="Wedler H."/>
            <person name="Wiemann S."/>
            <person name="Winsor B."/>
            <person name="Wolfe K.H."/>
            <person name="Zollner A."/>
            <person name="Zumstein E."/>
            <person name="Kleine K."/>
        </authorList>
    </citation>
    <scope>NUCLEOTIDE SEQUENCE [LARGE SCALE GENOMIC DNA]</scope>
    <source>
        <strain>ATCC 204508 / S288c</strain>
    </source>
</reference>
<reference key="4">
    <citation type="journal article" date="2014" name="G3 (Bethesda)">
        <title>The reference genome sequence of Saccharomyces cerevisiae: Then and now.</title>
        <authorList>
            <person name="Engel S.R."/>
            <person name="Dietrich F.S."/>
            <person name="Fisk D.G."/>
            <person name="Binkley G."/>
            <person name="Balakrishnan R."/>
            <person name="Costanzo M.C."/>
            <person name="Dwight S.S."/>
            <person name="Hitz B.C."/>
            <person name="Karra K."/>
            <person name="Nash R.S."/>
            <person name="Weng S."/>
            <person name="Wong E.D."/>
            <person name="Lloyd P."/>
            <person name="Skrzypek M.S."/>
            <person name="Miyasato S.R."/>
            <person name="Simison M."/>
            <person name="Cherry J.M."/>
        </authorList>
    </citation>
    <scope>GENOME REANNOTATION</scope>
    <source>
        <strain>ATCC 204508 / S288c</strain>
    </source>
</reference>
<reference key="5">
    <citation type="submission" date="1995-04" db="EMBL/GenBank/DDBJ databases">
        <authorList>
            <person name="Moore J."/>
            <person name="Jacobs H.T."/>
            <person name="Kaiser K."/>
        </authorList>
    </citation>
    <scope>PRELIMINARY NUCLEOTIDE SEQUENCE [MRNA] OF 29-126</scope>
    <source>
        <strain>ATCC 204660 / DBY746</strain>
    </source>
</reference>
<reference key="6">
    <citation type="journal article" date="1998" name="Yeast">
        <title>The list of cytoplasmic ribosomal proteins of Saccharomyces cerevisiae.</title>
        <authorList>
            <person name="Planta R.J."/>
            <person name="Mager W.H."/>
        </authorList>
    </citation>
    <scope>NOMENCLATURE</scope>
    <scope>SUBUNIT</scope>
</reference>
<reference key="7">
    <citation type="journal article" date="2007" name="Proc. Natl. Acad. Sci. U.S.A.">
        <title>Analysis of phosphorylation sites on proteins from Saccharomyces cerevisiae by electron transfer dissociation (ETD) mass spectrometry.</title>
        <authorList>
            <person name="Chi A."/>
            <person name="Huttenhower C."/>
            <person name="Geer L.Y."/>
            <person name="Coon J.J."/>
            <person name="Syka J.E.P."/>
            <person name="Bai D.L."/>
            <person name="Shabanowitz J."/>
            <person name="Burke D.J."/>
            <person name="Troyanskaya O.G."/>
            <person name="Hunt D.F."/>
        </authorList>
    </citation>
    <scope>IDENTIFICATION BY MASS SPECTROMETRY [LARGE SCALE ANALYSIS]</scope>
</reference>
<reference key="8">
    <citation type="journal article" date="2008" name="Mol. Cell. Proteomics">
        <title>A multidimensional chromatography technology for in-depth phosphoproteome analysis.</title>
        <authorList>
            <person name="Albuquerque C.P."/>
            <person name="Smolka M.B."/>
            <person name="Payne S.H."/>
            <person name="Bafna V."/>
            <person name="Eng J."/>
            <person name="Zhou H."/>
        </authorList>
    </citation>
    <scope>IDENTIFICATION BY MASS SPECTROMETRY [LARGE SCALE ANALYSIS]</scope>
</reference>
<reference key="9">
    <citation type="journal article" date="2012" name="Proteomics">
        <title>Sites of ubiquitin attachment in Saccharomyces cerevisiae.</title>
        <authorList>
            <person name="Starita L.M."/>
            <person name="Lo R.S."/>
            <person name="Eng J.K."/>
            <person name="von Haller P.D."/>
            <person name="Fields S."/>
        </authorList>
    </citation>
    <scope>UBIQUITINATION [LARGE SCALE ANALYSIS] AT LYS-85; LYS-95 AND LYS-114</scope>
    <scope>IDENTIFICATION BY MASS SPECTROMETRY [LARGE SCALE ANALYSIS]</scope>
</reference>
<reference key="10">
    <citation type="journal article" date="2014" name="Curr. Opin. Struct. Biol.">
        <title>A new system for naming ribosomal proteins.</title>
        <authorList>
            <person name="Ban N."/>
            <person name="Beckmann R."/>
            <person name="Cate J.H.D."/>
            <person name="Dinman J.D."/>
            <person name="Dragon F."/>
            <person name="Ellis S.R."/>
            <person name="Lafontaine D.L.J."/>
            <person name="Lindahl L."/>
            <person name="Liljas A."/>
            <person name="Lipton J.M."/>
            <person name="McAlear M.A."/>
            <person name="Moore P.B."/>
            <person name="Noller H.F."/>
            <person name="Ortega J."/>
            <person name="Panse V.G."/>
            <person name="Ramakrishnan V."/>
            <person name="Spahn C.M.T."/>
            <person name="Steitz T.A."/>
            <person name="Tchorzewski M."/>
            <person name="Tollervey D."/>
            <person name="Warren A.J."/>
            <person name="Williamson J.R."/>
            <person name="Wilson D."/>
            <person name="Yonath A."/>
            <person name="Yusupov M."/>
        </authorList>
    </citation>
    <scope>NOMENCLATURE</scope>
</reference>
<reference key="11">
    <citation type="journal article" date="2011" name="Science">
        <title>The structure of the eukaryotic ribosome at 3.0 A resolution.</title>
        <authorList>
            <person name="Ben-Shem A."/>
            <person name="Garreau de Loubresse N."/>
            <person name="Melnikov S."/>
            <person name="Jenner L."/>
            <person name="Yusupova G."/>
            <person name="Yusupov M."/>
        </authorList>
    </citation>
    <scope>X-RAY CRYSTALLOGRAPHY (3.00 ANGSTROMS) OF 80S RIBOSOME</scope>
    <scope>SUBUNIT</scope>
    <scope>SUBCELLULAR LOCATION</scope>
</reference>
<proteinExistence type="evidence at protein level"/>
<keyword id="KW-0002">3D-structure</keyword>
<keyword id="KW-0963">Cytoplasm</keyword>
<keyword id="KW-1017">Isopeptide bond</keyword>
<keyword id="KW-1185">Reference proteome</keyword>
<keyword id="KW-0687">Ribonucleoprotein</keyword>
<keyword id="KW-0689">Ribosomal protein</keyword>
<keyword id="KW-0832">Ubl conjugation</keyword>
<comment type="function">
    <text evidence="5">Component of the ribosome, a large ribonucleoprotein complex responsible for the synthesis of proteins in the cell. The small ribosomal subunit (SSU) binds messenger RNAs (mRNAs) and translates the encoded message by selecting cognate aminoacyl-transfer RNA (tRNA) molecules. The large subunit (LSU) contains the ribosomal catalytic site termed the peptidyl transferase center (PTC), which catalyzes the formation of peptide bonds, thereby polymerizing the amino acids delivered by tRNAs into a polypeptide chain. The nascent polypeptides leave the ribosome through a tunnel in the LSU and interact with protein factors that function in enzymatic processing, targeting, and the membrane insertion of nascent chains at the exit of the ribosomal tunnel.</text>
</comment>
<comment type="subunit">
    <text evidence="1 6">Component of the small ribosomal subunit (SSU). Mature yeast ribosomes consist of a small (40S) and a large (60S) subunit. The 40S small subunit contains 1 molecule of ribosomal RNA (18S rRNA) and 33 different proteins (encoded by 57 genes). The large 60S subunit contains 3 rRNA molecules (25S, 5.8S and 5S rRNA) and 46 different proteins (encoded by 81 genes) (PubMed:22096102, PubMed:9559554).</text>
</comment>
<comment type="subcellular location">
    <subcellularLocation>
        <location evidence="1">Cytoplasm</location>
    </subcellularLocation>
</comment>
<comment type="similarity">
    <text evidence="4">Belongs to the eukaryotic ribosomal protein eS12 family.</text>
</comment>
<gene>
    <name evidence="3" type="primary">RPS12</name>
    <name type="ordered locus">YOR369C</name>
</gene>
<protein>
    <recommendedName>
        <fullName evidence="2">Small ribosomal subunit protein eS12</fullName>
    </recommendedName>
    <alternativeName>
        <fullName evidence="3">40S ribosomal protein S12</fullName>
    </alternativeName>
</protein>
<name>RS12_YEAST</name>
<accession>P48589</accession>
<accession>D6W362</accession>
<accession>Q02545</accession>
<organism>
    <name type="scientific">Saccharomyces cerevisiae (strain ATCC 204508 / S288c)</name>
    <name type="common">Baker's yeast</name>
    <dbReference type="NCBI Taxonomy" id="559292"/>
    <lineage>
        <taxon>Eukaryota</taxon>
        <taxon>Fungi</taxon>
        <taxon>Dikarya</taxon>
        <taxon>Ascomycota</taxon>
        <taxon>Saccharomycotina</taxon>
        <taxon>Saccharomycetes</taxon>
        <taxon>Saccharomycetales</taxon>
        <taxon>Saccharomycetaceae</taxon>
        <taxon>Saccharomyces</taxon>
    </lineage>
</organism>
<dbReference type="EMBL" id="U37460">
    <property type="protein sequence ID" value="AAA80546.1"/>
    <property type="molecule type" value="Genomic_DNA"/>
</dbReference>
<dbReference type="EMBL" id="U01049">
    <property type="protein sequence ID" value="AAA69926.1"/>
    <property type="molecule type" value="Genomic_DNA"/>
</dbReference>
<dbReference type="EMBL" id="Z75277">
    <property type="protein sequence ID" value="CAA99700.1"/>
    <property type="molecule type" value="Genomic_DNA"/>
</dbReference>
<dbReference type="EMBL" id="U24143">
    <property type="protein sequence ID" value="AAA65439.1"/>
    <property type="status" value="ALT_SEQ"/>
    <property type="molecule type" value="mRNA"/>
</dbReference>
<dbReference type="EMBL" id="BK006948">
    <property type="protein sequence ID" value="DAA11128.1"/>
    <property type="molecule type" value="Genomic_DNA"/>
</dbReference>
<dbReference type="PIR" id="S62102">
    <property type="entry name" value="S62102"/>
</dbReference>
<dbReference type="RefSeq" id="NP_015014.3">
    <property type="nucleotide sequence ID" value="NM_001183789.3"/>
</dbReference>
<dbReference type="PDB" id="3J6X">
    <property type="method" value="EM"/>
    <property type="resolution" value="6.10 A"/>
    <property type="chains" value="12=1-143"/>
</dbReference>
<dbReference type="PDB" id="3J6Y">
    <property type="method" value="EM"/>
    <property type="resolution" value="6.10 A"/>
    <property type="chains" value="12=1-143"/>
</dbReference>
<dbReference type="PDB" id="3J77">
    <property type="method" value="EM"/>
    <property type="resolution" value="6.20 A"/>
    <property type="chains" value="12=1-143"/>
</dbReference>
<dbReference type="PDB" id="3J78">
    <property type="method" value="EM"/>
    <property type="resolution" value="6.30 A"/>
    <property type="chains" value="12=1-143"/>
</dbReference>
<dbReference type="PDB" id="4U3M">
    <property type="method" value="X-ray"/>
    <property type="resolution" value="3.00 A"/>
    <property type="chains" value="C2/c2=2-143"/>
</dbReference>
<dbReference type="PDB" id="4U3N">
    <property type="method" value="X-ray"/>
    <property type="resolution" value="3.20 A"/>
    <property type="chains" value="C2/c2=2-143"/>
</dbReference>
<dbReference type="PDB" id="4U3U">
    <property type="method" value="X-ray"/>
    <property type="resolution" value="2.90 A"/>
    <property type="chains" value="C2/c2=2-143"/>
</dbReference>
<dbReference type="PDB" id="4U4N">
    <property type="method" value="X-ray"/>
    <property type="resolution" value="3.10 A"/>
    <property type="chains" value="C2/c2=2-143"/>
</dbReference>
<dbReference type="PDB" id="4U4O">
    <property type="method" value="X-ray"/>
    <property type="resolution" value="3.60 A"/>
    <property type="chains" value="C2/c2=2-143"/>
</dbReference>
<dbReference type="PDB" id="4U4Q">
    <property type="method" value="X-ray"/>
    <property type="resolution" value="3.00 A"/>
    <property type="chains" value="C2/c2=2-143"/>
</dbReference>
<dbReference type="PDB" id="4U4R">
    <property type="method" value="X-ray"/>
    <property type="resolution" value="2.80 A"/>
    <property type="chains" value="C2/c2=2-143"/>
</dbReference>
<dbReference type="PDB" id="4U4U">
    <property type="method" value="X-ray"/>
    <property type="resolution" value="3.00 A"/>
    <property type="chains" value="C2/c2=2-143"/>
</dbReference>
<dbReference type="PDB" id="4U4Y">
    <property type="method" value="X-ray"/>
    <property type="resolution" value="3.20 A"/>
    <property type="chains" value="C2/c2=2-143"/>
</dbReference>
<dbReference type="PDB" id="4U4Z">
    <property type="method" value="X-ray"/>
    <property type="resolution" value="3.10 A"/>
    <property type="chains" value="C2/c2=2-143"/>
</dbReference>
<dbReference type="PDB" id="4U50">
    <property type="method" value="X-ray"/>
    <property type="resolution" value="3.20 A"/>
    <property type="chains" value="C2/c2=2-143"/>
</dbReference>
<dbReference type="PDB" id="4U51">
    <property type="method" value="X-ray"/>
    <property type="resolution" value="3.20 A"/>
    <property type="chains" value="C2/c2=2-143"/>
</dbReference>
<dbReference type="PDB" id="4U52">
    <property type="method" value="X-ray"/>
    <property type="resolution" value="3.00 A"/>
    <property type="chains" value="C2/c2=2-143"/>
</dbReference>
<dbReference type="PDB" id="4U53">
    <property type="method" value="X-ray"/>
    <property type="resolution" value="3.30 A"/>
    <property type="chains" value="C2/c2=2-143"/>
</dbReference>
<dbReference type="PDB" id="4U55">
    <property type="method" value="X-ray"/>
    <property type="resolution" value="3.20 A"/>
    <property type="chains" value="C2/c2=2-143"/>
</dbReference>
<dbReference type="PDB" id="4U56">
    <property type="method" value="X-ray"/>
    <property type="resolution" value="3.45 A"/>
    <property type="chains" value="C2/c2=2-143"/>
</dbReference>
<dbReference type="PDB" id="4U6F">
    <property type="method" value="X-ray"/>
    <property type="resolution" value="3.10 A"/>
    <property type="chains" value="C2/c2=2-143"/>
</dbReference>
<dbReference type="PDB" id="4V88">
    <property type="method" value="X-ray"/>
    <property type="resolution" value="3.00 A"/>
    <property type="chains" value="AM/CM=1-143"/>
</dbReference>
<dbReference type="PDB" id="4V8Y">
    <property type="method" value="EM"/>
    <property type="resolution" value="4.30 A"/>
    <property type="chains" value="AM=1-143"/>
</dbReference>
<dbReference type="PDB" id="4V8Z">
    <property type="method" value="EM"/>
    <property type="resolution" value="6.60 A"/>
    <property type="chains" value="AM=1-143"/>
</dbReference>
<dbReference type="PDB" id="4V92">
    <property type="method" value="EM"/>
    <property type="resolution" value="3.70 A"/>
    <property type="chains" value="M=24-143"/>
</dbReference>
<dbReference type="PDB" id="5DAT">
    <property type="method" value="X-ray"/>
    <property type="resolution" value="3.15 A"/>
    <property type="chains" value="C2/c2=20-142"/>
</dbReference>
<dbReference type="PDB" id="5DC3">
    <property type="method" value="X-ray"/>
    <property type="resolution" value="3.25 A"/>
    <property type="chains" value="C2/c2=2-143"/>
</dbReference>
<dbReference type="PDB" id="5DGE">
    <property type="method" value="X-ray"/>
    <property type="resolution" value="3.45 A"/>
    <property type="chains" value="C2/c2=2-143"/>
</dbReference>
<dbReference type="PDB" id="5DGF">
    <property type="method" value="X-ray"/>
    <property type="resolution" value="3.30 A"/>
    <property type="chains" value="C2/c2=1-143"/>
</dbReference>
<dbReference type="PDB" id="5DGV">
    <property type="method" value="X-ray"/>
    <property type="resolution" value="3.10 A"/>
    <property type="chains" value="C2/c2=2-143"/>
</dbReference>
<dbReference type="PDB" id="5FCI">
    <property type="method" value="X-ray"/>
    <property type="resolution" value="3.40 A"/>
    <property type="chains" value="C2/c2=2-143"/>
</dbReference>
<dbReference type="PDB" id="5FCJ">
    <property type="method" value="X-ray"/>
    <property type="resolution" value="3.10 A"/>
    <property type="chains" value="C2/c2=2-143"/>
</dbReference>
<dbReference type="PDB" id="5I4L">
    <property type="method" value="X-ray"/>
    <property type="resolution" value="3.10 A"/>
    <property type="chains" value="C2/c2=20-143"/>
</dbReference>
<dbReference type="PDB" id="5JUO">
    <property type="method" value="EM"/>
    <property type="resolution" value="4.00 A"/>
    <property type="chains" value="JB=1-143"/>
</dbReference>
<dbReference type="PDB" id="5JUP">
    <property type="method" value="EM"/>
    <property type="resolution" value="3.50 A"/>
    <property type="chains" value="JB=1-143"/>
</dbReference>
<dbReference type="PDB" id="5JUS">
    <property type="method" value="EM"/>
    <property type="resolution" value="4.20 A"/>
    <property type="chains" value="JB=1-143"/>
</dbReference>
<dbReference type="PDB" id="5JUT">
    <property type="method" value="EM"/>
    <property type="resolution" value="4.00 A"/>
    <property type="chains" value="JB=1-143"/>
</dbReference>
<dbReference type="PDB" id="5JUU">
    <property type="method" value="EM"/>
    <property type="resolution" value="4.00 A"/>
    <property type="chains" value="JB=1-143"/>
</dbReference>
<dbReference type="PDB" id="5LYB">
    <property type="method" value="X-ray"/>
    <property type="resolution" value="3.25 A"/>
    <property type="chains" value="C2=20-143, c2=25-143"/>
</dbReference>
<dbReference type="PDB" id="5M1J">
    <property type="method" value="EM"/>
    <property type="resolution" value="3.30 A"/>
    <property type="chains" value="M2=20-143"/>
</dbReference>
<dbReference type="PDB" id="5MC6">
    <property type="method" value="EM"/>
    <property type="resolution" value="3.80 A"/>
    <property type="chains" value="D=1-143"/>
</dbReference>
<dbReference type="PDB" id="5MEI">
    <property type="method" value="X-ray"/>
    <property type="resolution" value="3.50 A"/>
    <property type="chains" value="N/c2=20-143"/>
</dbReference>
<dbReference type="PDB" id="5NDG">
    <property type="method" value="X-ray"/>
    <property type="resolution" value="3.70 A"/>
    <property type="chains" value="C2/c2=1-143"/>
</dbReference>
<dbReference type="PDB" id="5NDV">
    <property type="method" value="X-ray"/>
    <property type="resolution" value="3.30 A"/>
    <property type="chains" value="C2/c2=1-143"/>
</dbReference>
<dbReference type="PDB" id="5NDW">
    <property type="method" value="X-ray"/>
    <property type="resolution" value="3.70 A"/>
    <property type="chains" value="C2/c2=1-143"/>
</dbReference>
<dbReference type="PDB" id="5OBM">
    <property type="method" value="X-ray"/>
    <property type="resolution" value="3.40 A"/>
    <property type="chains" value="C2/c2=1-143"/>
</dbReference>
<dbReference type="PDB" id="5ON6">
    <property type="method" value="X-ray"/>
    <property type="resolution" value="3.10 A"/>
    <property type="chains" value="N/c2=20-143"/>
</dbReference>
<dbReference type="PDB" id="5TBW">
    <property type="method" value="X-ray"/>
    <property type="resolution" value="3.00 A"/>
    <property type="chains" value="N/c2=1-143"/>
</dbReference>
<dbReference type="PDB" id="5TGA">
    <property type="method" value="X-ray"/>
    <property type="resolution" value="3.30 A"/>
    <property type="chains" value="C2/c2=20-143"/>
</dbReference>
<dbReference type="PDB" id="5TGM">
    <property type="method" value="X-ray"/>
    <property type="resolution" value="3.50 A"/>
    <property type="chains" value="C2/c2=25-143"/>
</dbReference>
<dbReference type="PDB" id="5WYJ">
    <property type="method" value="EM"/>
    <property type="resolution" value="8.70 A"/>
    <property type="chains" value="SN=1-143"/>
</dbReference>
<dbReference type="PDB" id="6EML">
    <property type="method" value="EM"/>
    <property type="resolution" value="3.60 A"/>
    <property type="chains" value="D=1-143"/>
</dbReference>
<dbReference type="PDB" id="6FAI">
    <property type="method" value="EM"/>
    <property type="resolution" value="3.40 A"/>
    <property type="chains" value="M=1-143"/>
</dbReference>
<dbReference type="PDB" id="6GQ1">
    <property type="method" value="EM"/>
    <property type="resolution" value="4.40 A"/>
    <property type="chains" value="AC=20-143"/>
</dbReference>
<dbReference type="PDB" id="6GQB">
    <property type="method" value="EM"/>
    <property type="resolution" value="3.90 A"/>
    <property type="chains" value="AC=20-143"/>
</dbReference>
<dbReference type="PDB" id="6GQV">
    <property type="method" value="EM"/>
    <property type="resolution" value="4.00 A"/>
    <property type="chains" value="AC=20-143"/>
</dbReference>
<dbReference type="PDB" id="6HHQ">
    <property type="method" value="X-ray"/>
    <property type="resolution" value="3.10 A"/>
    <property type="chains" value="N/c2=1-143"/>
</dbReference>
<dbReference type="PDB" id="6I7O">
    <property type="method" value="EM"/>
    <property type="resolution" value="5.30 A"/>
    <property type="chains" value="D/Db=20-143"/>
</dbReference>
<dbReference type="PDB" id="6KE6">
    <property type="method" value="EM"/>
    <property type="resolution" value="3.40 A"/>
    <property type="chains" value="SN=1-143"/>
</dbReference>
<dbReference type="PDB" id="6LQP">
    <property type="method" value="EM"/>
    <property type="resolution" value="3.20 A"/>
    <property type="chains" value="SN=1-143"/>
</dbReference>
<dbReference type="PDB" id="6LQU">
    <property type="method" value="EM"/>
    <property type="resolution" value="3.70 A"/>
    <property type="chains" value="SN=1-143"/>
</dbReference>
<dbReference type="PDB" id="6Q8Y">
    <property type="method" value="EM"/>
    <property type="resolution" value="3.10 A"/>
    <property type="chains" value="D=23-143"/>
</dbReference>
<dbReference type="PDB" id="6RBD">
    <property type="method" value="EM"/>
    <property type="resolution" value="3.47 A"/>
    <property type="chains" value="M=1-143"/>
</dbReference>
<dbReference type="PDB" id="6RBE">
    <property type="method" value="EM"/>
    <property type="resolution" value="3.80 A"/>
    <property type="chains" value="M=1-143"/>
</dbReference>
<dbReference type="PDB" id="6S47">
    <property type="method" value="EM"/>
    <property type="resolution" value="3.28 A"/>
    <property type="chains" value="BN=2-143"/>
</dbReference>
<dbReference type="PDB" id="6SNT">
    <property type="method" value="EM"/>
    <property type="resolution" value="2.80 A"/>
    <property type="chains" value="M=1-143"/>
</dbReference>
<dbReference type="PDB" id="6SV4">
    <property type="method" value="EM"/>
    <property type="resolution" value="3.30 A"/>
    <property type="chains" value="D/Db/Dc=1-143"/>
</dbReference>
<dbReference type="PDB" id="6T4Q">
    <property type="method" value="EM"/>
    <property type="resolution" value="2.60 A"/>
    <property type="chains" value="SM=23-143"/>
</dbReference>
<dbReference type="PDB" id="6T7I">
    <property type="method" value="EM"/>
    <property type="resolution" value="3.20 A"/>
    <property type="chains" value="SM=1-143"/>
</dbReference>
<dbReference type="PDB" id="6T7T">
    <property type="method" value="EM"/>
    <property type="resolution" value="3.10 A"/>
    <property type="chains" value="SM=1-143"/>
</dbReference>
<dbReference type="PDB" id="6T83">
    <property type="method" value="EM"/>
    <property type="resolution" value="4.00 A"/>
    <property type="chains" value="Mb/n=1-143"/>
</dbReference>
<dbReference type="PDB" id="6TB3">
    <property type="method" value="EM"/>
    <property type="resolution" value="2.80 A"/>
    <property type="chains" value="D=23-143"/>
</dbReference>
<dbReference type="PDB" id="6TNU">
    <property type="method" value="EM"/>
    <property type="resolution" value="3.10 A"/>
    <property type="chains" value="D=23-143"/>
</dbReference>
<dbReference type="PDB" id="6WDR">
    <property type="method" value="EM"/>
    <property type="resolution" value="3.70 A"/>
    <property type="chains" value="M=18-142"/>
</dbReference>
<dbReference type="PDB" id="6WOO">
    <property type="method" value="EM"/>
    <property type="resolution" value="2.90 A"/>
    <property type="chains" value="MM=20-143"/>
</dbReference>
<dbReference type="PDB" id="6Y7C">
    <property type="method" value="EM"/>
    <property type="resolution" value="3.80 A"/>
    <property type="chains" value="M=1-143"/>
</dbReference>
<dbReference type="PDB" id="6Z6J">
    <property type="method" value="EM"/>
    <property type="resolution" value="3.40 A"/>
    <property type="chains" value="SM=1-143"/>
</dbReference>
<dbReference type="PDB" id="6Z6K">
    <property type="method" value="EM"/>
    <property type="resolution" value="3.40 A"/>
    <property type="chains" value="SM=1-143"/>
</dbReference>
<dbReference type="PDB" id="6ZCE">
    <property type="method" value="EM"/>
    <property type="resolution" value="5.30 A"/>
    <property type="chains" value="N=1-143"/>
</dbReference>
<dbReference type="PDB" id="6ZU9">
    <property type="method" value="EM"/>
    <property type="resolution" value="6.20 A"/>
    <property type="chains" value="F=1-143"/>
</dbReference>
<dbReference type="PDB" id="6ZVI">
    <property type="method" value="EM"/>
    <property type="resolution" value="3.00 A"/>
    <property type="chains" value="u=20-143"/>
</dbReference>
<dbReference type="PDB" id="7A1G">
    <property type="method" value="EM"/>
    <property type="resolution" value="3.00 A"/>
    <property type="chains" value="D=23-143"/>
</dbReference>
<dbReference type="PDB" id="7B7D">
    <property type="method" value="EM"/>
    <property type="resolution" value="3.30 A"/>
    <property type="chains" value="D=23-143"/>
</dbReference>
<dbReference type="PDB" id="7D5S">
    <property type="method" value="EM"/>
    <property type="resolution" value="4.60 A"/>
    <property type="chains" value="SN=1-143"/>
</dbReference>
<dbReference type="PDB" id="7MPI">
    <property type="method" value="EM"/>
    <property type="resolution" value="3.05 A"/>
    <property type="chains" value="BM=23-143"/>
</dbReference>
<dbReference type="PDB" id="7MPJ">
    <property type="method" value="EM"/>
    <property type="resolution" value="2.70 A"/>
    <property type="chains" value="BM=23-143"/>
</dbReference>
<dbReference type="PDB" id="7N8B">
    <property type="method" value="EM"/>
    <property type="resolution" value="3.05 A"/>
    <property type="chains" value="BM=23-143"/>
</dbReference>
<dbReference type="PDB" id="7NRC">
    <property type="method" value="EM"/>
    <property type="resolution" value="3.90 A"/>
    <property type="chains" value="SD=23-143"/>
</dbReference>
<dbReference type="PDB" id="7NRD">
    <property type="method" value="EM"/>
    <property type="resolution" value="4.36 A"/>
    <property type="chains" value="SD=20-143"/>
</dbReference>
<dbReference type="PDB" id="7ZPQ">
    <property type="method" value="EM"/>
    <property type="resolution" value="3.47 A"/>
    <property type="chains" value="AM=23-143"/>
</dbReference>
<dbReference type="PDB" id="7ZRS">
    <property type="method" value="EM"/>
    <property type="resolution" value="4.80 A"/>
    <property type="chains" value="AM=23-143"/>
</dbReference>
<dbReference type="PDB" id="7ZUW">
    <property type="method" value="EM"/>
    <property type="resolution" value="4.30 A"/>
    <property type="chains" value="AM=23-143"/>
</dbReference>
<dbReference type="PDB" id="7ZUX">
    <property type="method" value="EM"/>
    <property type="resolution" value="2.50 A"/>
    <property type="chains" value="DM=23-143"/>
</dbReference>
<dbReference type="PDB" id="7ZW0">
    <property type="method" value="EM"/>
    <property type="resolution" value="2.40 A"/>
    <property type="chains" value="sD=1-143"/>
</dbReference>
<dbReference type="PDB" id="8BQD">
    <property type="method" value="EM"/>
    <property type="resolution" value="3.90 A"/>
    <property type="chains" value="D=23-143"/>
</dbReference>
<dbReference type="PDB" id="8BQX">
    <property type="method" value="EM"/>
    <property type="resolution" value="3.80 A"/>
    <property type="chains" value="D=23-143"/>
</dbReference>
<dbReference type="PDB" id="8CAH">
    <property type="method" value="EM"/>
    <property type="resolution" value="3.00 A"/>
    <property type="chains" value="D=1-143"/>
</dbReference>
<dbReference type="PDB" id="8CAS">
    <property type="method" value="EM"/>
    <property type="resolution" value="3.30 A"/>
    <property type="chains" value="F=1-143"/>
</dbReference>
<dbReference type="PDB" id="8CBJ">
    <property type="method" value="EM"/>
    <property type="resolution" value="3.80 A"/>
    <property type="chains" value="M=1-143"/>
</dbReference>
<dbReference type="PDB" id="8K2D">
    <property type="method" value="EM"/>
    <property type="resolution" value="3.20 A"/>
    <property type="chains" value="SM=1-143"/>
</dbReference>
<dbReference type="PDB" id="8K82">
    <property type="method" value="EM"/>
    <property type="resolution" value="3.00 A"/>
    <property type="chains" value="SM=1-143"/>
</dbReference>
<dbReference type="PDB" id="8P4V">
    <property type="method" value="X-ray"/>
    <property type="resolution" value="3.16 A"/>
    <property type="chains" value="N/c2=1-143"/>
</dbReference>
<dbReference type="PDB" id="8P9A">
    <property type="method" value="X-ray"/>
    <property type="resolution" value="2.90 A"/>
    <property type="chains" value="N=1-143"/>
</dbReference>
<dbReference type="PDB" id="8T2X">
    <property type="method" value="EM"/>
    <property type="resolution" value="2.46 A"/>
    <property type="chains" value="BM=1-143"/>
</dbReference>
<dbReference type="PDB" id="8T2Y">
    <property type="method" value="EM"/>
    <property type="resolution" value="2.20 A"/>
    <property type="chains" value="BM=1-143"/>
</dbReference>
<dbReference type="PDB" id="8T2Z">
    <property type="method" value="EM"/>
    <property type="resolution" value="2.40 A"/>
    <property type="chains" value="BM=1-143"/>
</dbReference>
<dbReference type="PDB" id="8T30">
    <property type="method" value="EM"/>
    <property type="resolution" value="2.88 A"/>
    <property type="chains" value="BM=1-143"/>
</dbReference>
<dbReference type="PDB" id="8T3A">
    <property type="method" value="EM"/>
    <property type="resolution" value="2.86 A"/>
    <property type="chains" value="BM=1-143"/>
</dbReference>
<dbReference type="PDB" id="8T3B">
    <property type="method" value="EM"/>
    <property type="resolution" value="3.08 A"/>
    <property type="chains" value="BM=1-143"/>
</dbReference>
<dbReference type="PDB" id="8T3C">
    <property type="method" value="EM"/>
    <property type="resolution" value="3.86 A"/>
    <property type="chains" value="BM=1-143"/>
</dbReference>
<dbReference type="PDB" id="8T3D">
    <property type="method" value="EM"/>
    <property type="resolution" value="2.95 A"/>
    <property type="chains" value="BM=1-143"/>
</dbReference>
<dbReference type="PDB" id="8T3E">
    <property type="method" value="EM"/>
    <property type="resolution" value="3.04 A"/>
    <property type="chains" value="BM=1-143"/>
</dbReference>
<dbReference type="PDB" id="8T3F">
    <property type="method" value="EM"/>
    <property type="resolution" value="3.09 A"/>
    <property type="chains" value="BM=1-143"/>
</dbReference>
<dbReference type="PDB" id="8UT0">
    <property type="method" value="EM"/>
    <property type="resolution" value="3.22 A"/>
    <property type="chains" value="SD=23-143"/>
</dbReference>
<dbReference type="PDB" id="8UTI">
    <property type="method" value="EM"/>
    <property type="resolution" value="3.13 A"/>
    <property type="chains" value="SD=23-143"/>
</dbReference>
<dbReference type="PDB" id="8XU8">
    <property type="method" value="EM"/>
    <property type="resolution" value="3.40 A"/>
    <property type="chains" value="SD=23-143"/>
</dbReference>
<dbReference type="PDB" id="8Y0U">
    <property type="method" value="EM"/>
    <property type="resolution" value="3.59 A"/>
    <property type="chains" value="SM=1-143"/>
</dbReference>
<dbReference type="PDB" id="8YLD">
    <property type="method" value="EM"/>
    <property type="resolution" value="3.90 A"/>
    <property type="chains" value="SD=23-143"/>
</dbReference>
<dbReference type="PDB" id="8YLR">
    <property type="method" value="EM"/>
    <property type="resolution" value="3.90 A"/>
    <property type="chains" value="SD=23-143"/>
</dbReference>
<dbReference type="PDB" id="8Z70">
    <property type="method" value="EM"/>
    <property type="resolution" value="3.20 A"/>
    <property type="chains" value="SD=23-143"/>
</dbReference>
<dbReference type="PDB" id="8Z71">
    <property type="method" value="EM"/>
    <property type="resolution" value="3.60 A"/>
    <property type="chains" value="SD=23-143"/>
</dbReference>
<dbReference type="PDB" id="9F9S">
    <property type="method" value="EM"/>
    <property type="resolution" value="2.90 A"/>
    <property type="chains" value="Rm/Sm=1-143"/>
</dbReference>
<dbReference type="PDBsum" id="3J6X"/>
<dbReference type="PDBsum" id="3J6Y"/>
<dbReference type="PDBsum" id="3J77"/>
<dbReference type="PDBsum" id="3J78"/>
<dbReference type="PDBsum" id="4U3M"/>
<dbReference type="PDBsum" id="4U3N"/>
<dbReference type="PDBsum" id="4U3U"/>
<dbReference type="PDBsum" id="4U4N"/>
<dbReference type="PDBsum" id="4U4O"/>
<dbReference type="PDBsum" id="4U4Q"/>
<dbReference type="PDBsum" id="4U4R"/>
<dbReference type="PDBsum" id="4U4U"/>
<dbReference type="PDBsum" id="4U4Y"/>
<dbReference type="PDBsum" id="4U4Z"/>
<dbReference type="PDBsum" id="4U50"/>
<dbReference type="PDBsum" id="4U51"/>
<dbReference type="PDBsum" id="4U52"/>
<dbReference type="PDBsum" id="4U53"/>
<dbReference type="PDBsum" id="4U55"/>
<dbReference type="PDBsum" id="4U56"/>
<dbReference type="PDBsum" id="4U6F"/>
<dbReference type="PDBsum" id="4V88"/>
<dbReference type="PDBsum" id="4V8Y"/>
<dbReference type="PDBsum" id="4V8Z"/>
<dbReference type="PDBsum" id="4V92"/>
<dbReference type="PDBsum" id="5DAT"/>
<dbReference type="PDBsum" id="5DC3"/>
<dbReference type="PDBsum" id="5DGE"/>
<dbReference type="PDBsum" id="5DGF"/>
<dbReference type="PDBsum" id="5DGV"/>
<dbReference type="PDBsum" id="5FCI"/>
<dbReference type="PDBsum" id="5FCJ"/>
<dbReference type="PDBsum" id="5I4L"/>
<dbReference type="PDBsum" id="5JUO"/>
<dbReference type="PDBsum" id="5JUP"/>
<dbReference type="PDBsum" id="5JUS"/>
<dbReference type="PDBsum" id="5JUT"/>
<dbReference type="PDBsum" id="5JUU"/>
<dbReference type="PDBsum" id="5LYB"/>
<dbReference type="PDBsum" id="5M1J"/>
<dbReference type="PDBsum" id="5MC6"/>
<dbReference type="PDBsum" id="5MEI"/>
<dbReference type="PDBsum" id="5NDG"/>
<dbReference type="PDBsum" id="5NDV"/>
<dbReference type="PDBsum" id="5NDW"/>
<dbReference type="PDBsum" id="5OBM"/>
<dbReference type="PDBsum" id="5ON6"/>
<dbReference type="PDBsum" id="5TBW"/>
<dbReference type="PDBsum" id="5TGA"/>
<dbReference type="PDBsum" id="5TGM"/>
<dbReference type="PDBsum" id="5WYJ"/>
<dbReference type="PDBsum" id="6EML"/>
<dbReference type="PDBsum" id="6FAI"/>
<dbReference type="PDBsum" id="6GQ1"/>
<dbReference type="PDBsum" id="6GQB"/>
<dbReference type="PDBsum" id="6GQV"/>
<dbReference type="PDBsum" id="6HHQ"/>
<dbReference type="PDBsum" id="6I7O"/>
<dbReference type="PDBsum" id="6KE6"/>
<dbReference type="PDBsum" id="6LQP"/>
<dbReference type="PDBsum" id="6LQU"/>
<dbReference type="PDBsum" id="6Q8Y"/>
<dbReference type="PDBsum" id="6RBD"/>
<dbReference type="PDBsum" id="6RBE"/>
<dbReference type="PDBsum" id="6S47"/>
<dbReference type="PDBsum" id="6SNT"/>
<dbReference type="PDBsum" id="6SV4"/>
<dbReference type="PDBsum" id="6T4Q"/>
<dbReference type="PDBsum" id="6T7I"/>
<dbReference type="PDBsum" id="6T7T"/>
<dbReference type="PDBsum" id="6T83"/>
<dbReference type="PDBsum" id="6TB3"/>
<dbReference type="PDBsum" id="6TNU"/>
<dbReference type="PDBsum" id="6WDR"/>
<dbReference type="PDBsum" id="6WOO"/>
<dbReference type="PDBsum" id="6Y7C"/>
<dbReference type="PDBsum" id="6Z6J"/>
<dbReference type="PDBsum" id="6Z6K"/>
<dbReference type="PDBsum" id="6ZCE"/>
<dbReference type="PDBsum" id="6ZU9"/>
<dbReference type="PDBsum" id="6ZVI"/>
<dbReference type="PDBsum" id="7A1G"/>
<dbReference type="PDBsum" id="7B7D"/>
<dbReference type="PDBsum" id="7D5S"/>
<dbReference type="PDBsum" id="7MPI"/>
<dbReference type="PDBsum" id="7MPJ"/>
<dbReference type="PDBsum" id="7N8B"/>
<dbReference type="PDBsum" id="7NRC"/>
<dbReference type="PDBsum" id="7NRD"/>
<dbReference type="PDBsum" id="7ZPQ"/>
<dbReference type="PDBsum" id="7ZRS"/>
<dbReference type="PDBsum" id="7ZUW"/>
<dbReference type="PDBsum" id="7ZUX"/>
<dbReference type="PDBsum" id="7ZW0"/>
<dbReference type="PDBsum" id="8BQD"/>
<dbReference type="PDBsum" id="8BQX"/>
<dbReference type="PDBsum" id="8CAH"/>
<dbReference type="PDBsum" id="8CAS"/>
<dbReference type="PDBsum" id="8CBJ"/>
<dbReference type="PDBsum" id="8K2D"/>
<dbReference type="PDBsum" id="8K82"/>
<dbReference type="PDBsum" id="8P4V"/>
<dbReference type="PDBsum" id="8P9A"/>
<dbReference type="PDBsum" id="8T2X"/>
<dbReference type="PDBsum" id="8T2Y"/>
<dbReference type="PDBsum" id="8T2Z"/>
<dbReference type="PDBsum" id="8T30"/>
<dbReference type="PDBsum" id="8T3A"/>
<dbReference type="PDBsum" id="8T3B"/>
<dbReference type="PDBsum" id="8T3C"/>
<dbReference type="PDBsum" id="8T3D"/>
<dbReference type="PDBsum" id="8T3E"/>
<dbReference type="PDBsum" id="8T3F"/>
<dbReference type="PDBsum" id="8UT0"/>
<dbReference type="PDBsum" id="8UTI"/>
<dbReference type="PDBsum" id="8XU8"/>
<dbReference type="PDBsum" id="8Y0U"/>
<dbReference type="PDBsum" id="8YLD"/>
<dbReference type="PDBsum" id="8YLR"/>
<dbReference type="PDBsum" id="8Z70"/>
<dbReference type="PDBsum" id="8Z71"/>
<dbReference type="PDBsum" id="9F9S"/>
<dbReference type="EMDB" id="EMD-0047"/>
<dbReference type="EMDB" id="EMD-0048"/>
<dbReference type="EMDB" id="EMD-0049"/>
<dbReference type="EMDB" id="EMD-0949"/>
<dbReference type="EMDB" id="EMD-0954"/>
<dbReference type="EMDB" id="EMD-10098"/>
<dbReference type="EMDB" id="EMD-10262"/>
<dbReference type="EMDB" id="EMD-10315"/>
<dbReference type="EMDB" id="EMD-10377"/>
<dbReference type="EMDB" id="EMD-10396"/>
<dbReference type="EMDB" id="EMD-10397"/>
<dbReference type="EMDB" id="EMD-10398"/>
<dbReference type="EMDB" id="EMD-10431"/>
<dbReference type="EMDB" id="EMD-10537"/>
<dbReference type="EMDB" id="EMD-10713"/>
<dbReference type="EMDB" id="EMD-11096"/>
<dbReference type="EMDB" id="EMD-11097"/>
<dbReference type="EMDB" id="EMD-11160"/>
<dbReference type="EMDB" id="EMD-11439"/>
<dbReference type="EMDB" id="EMD-11608"/>
<dbReference type="EMDB" id="EMD-12081"/>
<dbReference type="EMDB" id="EMD-12534"/>
<dbReference type="EMDB" id="EMD-12535"/>
<dbReference type="EMDB" id="EMD-14979"/>
<dbReference type="EMDB" id="EMD-14990"/>
<dbReference type="EMDB" id="EMD-16191"/>
<dbReference type="EMDB" id="EMD-16525"/>
<dbReference type="EMDB" id="EMD-16533"/>
<dbReference type="EMDB" id="EMD-16541"/>
<dbReference type="EMDB" id="EMD-21644"/>
<dbReference type="EMDB" id="EMD-21859"/>
<dbReference type="EMDB" id="EMD-23934"/>
<dbReference type="EMDB" id="EMD-23935"/>
<dbReference type="EMDB" id="EMD-24235"/>
<dbReference type="EMDB" id="EMD-30584"/>
<dbReference type="EMDB" id="EMD-3461"/>
<dbReference type="EMDB" id="EMD-36839"/>
<dbReference type="EMDB" id="EMD-36945"/>
<dbReference type="EMDB" id="EMD-38660"/>
<dbReference type="EMDB" id="EMD-4140"/>
<dbReference type="EMDB" id="EMD-4214"/>
<dbReference type="EMDB" id="EMD-42525"/>
<dbReference type="EMDB" id="EMD-42540"/>
<dbReference type="EMDB" id="EMD-4427"/>
<dbReference type="EMDB" id="EMD-4474"/>
<dbReference type="EMDB" id="EMD-4792"/>
<dbReference type="EMDB" id="EMD-4793"/>
<dbReference type="EMDB" id="EMD-50259"/>
<dbReference type="EMDB" id="EMD-6695"/>
<dbReference type="EMDB" id="EMD-9964"/>
<dbReference type="SMR" id="P48589"/>
<dbReference type="BioGRID" id="34752">
    <property type="interactions" value="727"/>
</dbReference>
<dbReference type="ComplexPortal" id="CPX-1599">
    <property type="entry name" value="40S cytosolic small ribosomal subunit"/>
</dbReference>
<dbReference type="FunCoup" id="P48589">
    <property type="interactions" value="1245"/>
</dbReference>
<dbReference type="IntAct" id="P48589">
    <property type="interactions" value="73"/>
</dbReference>
<dbReference type="MINT" id="P48589"/>
<dbReference type="STRING" id="4932.YOR369C"/>
<dbReference type="CarbonylDB" id="P48589"/>
<dbReference type="iPTMnet" id="P48589"/>
<dbReference type="PaxDb" id="4932-YOR369C"/>
<dbReference type="PeptideAtlas" id="P48589"/>
<dbReference type="TopDownProteomics" id="P48589"/>
<dbReference type="EnsemblFungi" id="YOR369C_mRNA">
    <property type="protein sequence ID" value="YOR369C"/>
    <property type="gene ID" value="YOR369C"/>
</dbReference>
<dbReference type="GeneID" id="854551"/>
<dbReference type="KEGG" id="sce:YOR369C"/>
<dbReference type="AGR" id="SGD:S000005896"/>
<dbReference type="SGD" id="S000005896">
    <property type="gene designation" value="RPS12"/>
</dbReference>
<dbReference type="VEuPathDB" id="FungiDB:YOR369C"/>
<dbReference type="eggNOG" id="KOG3406">
    <property type="taxonomic scope" value="Eukaryota"/>
</dbReference>
<dbReference type="GeneTree" id="ENSGT00390000018318"/>
<dbReference type="HOGENOM" id="CLU_110343_1_0_1"/>
<dbReference type="InParanoid" id="P48589"/>
<dbReference type="OMA" id="CAEHQIP"/>
<dbReference type="OrthoDB" id="10249311at2759"/>
<dbReference type="BioCyc" id="YEAST:G3O-33837-MONOMER"/>
<dbReference type="Reactome" id="R-SCE-156827">
    <property type="pathway name" value="L13a-mediated translational silencing of Ceruloplasmin expression"/>
</dbReference>
<dbReference type="Reactome" id="R-SCE-1799339">
    <property type="pathway name" value="SRP-dependent cotranslational protein targeting to membrane"/>
</dbReference>
<dbReference type="Reactome" id="R-SCE-72649">
    <property type="pathway name" value="Translation initiation complex formation"/>
</dbReference>
<dbReference type="Reactome" id="R-SCE-72689">
    <property type="pathway name" value="Formation of a pool of free 40S subunits"/>
</dbReference>
<dbReference type="Reactome" id="R-SCE-72695">
    <property type="pathway name" value="Formation of the ternary complex, and subsequently, the 43S complex"/>
</dbReference>
<dbReference type="Reactome" id="R-SCE-72702">
    <property type="pathway name" value="Ribosomal scanning and start codon recognition"/>
</dbReference>
<dbReference type="Reactome" id="R-SCE-72706">
    <property type="pathway name" value="GTP hydrolysis and joining of the 60S ribosomal subunit"/>
</dbReference>
<dbReference type="Reactome" id="R-SCE-975956">
    <property type="pathway name" value="Nonsense Mediated Decay (NMD) independent of the Exon Junction Complex (EJC)"/>
</dbReference>
<dbReference type="Reactome" id="R-SCE-975957">
    <property type="pathway name" value="Nonsense Mediated Decay (NMD) enhanced by the Exon Junction Complex (EJC)"/>
</dbReference>
<dbReference type="BioGRID-ORCS" id="854551">
    <property type="hits" value="6 hits in 10 CRISPR screens"/>
</dbReference>
<dbReference type="CD-CODE" id="E03F929F">
    <property type="entry name" value="Stress granule"/>
</dbReference>
<dbReference type="ChiTaRS" id="RPS12">
    <property type="organism name" value="yeast"/>
</dbReference>
<dbReference type="PRO" id="PR:P48589"/>
<dbReference type="Proteomes" id="UP000002311">
    <property type="component" value="Chromosome XV"/>
</dbReference>
<dbReference type="RNAct" id="P48589">
    <property type="molecule type" value="protein"/>
</dbReference>
<dbReference type="GO" id="GO:0005737">
    <property type="term" value="C:cytoplasm"/>
    <property type="evidence" value="ECO:0000314"/>
    <property type="project" value="ComplexPortal"/>
</dbReference>
<dbReference type="GO" id="GO:0005829">
    <property type="term" value="C:cytosol"/>
    <property type="evidence" value="ECO:0000304"/>
    <property type="project" value="Reactome"/>
</dbReference>
<dbReference type="GO" id="GO:0022627">
    <property type="term" value="C:cytosolic small ribosomal subunit"/>
    <property type="evidence" value="ECO:0000314"/>
    <property type="project" value="SGD"/>
</dbReference>
<dbReference type="GO" id="GO:0003735">
    <property type="term" value="F:structural constituent of ribosome"/>
    <property type="evidence" value="ECO:0000314"/>
    <property type="project" value="SGD"/>
</dbReference>
<dbReference type="GO" id="GO:0002181">
    <property type="term" value="P:cytoplasmic translation"/>
    <property type="evidence" value="ECO:0000303"/>
    <property type="project" value="ComplexPortal"/>
</dbReference>
<dbReference type="GO" id="GO:1990145">
    <property type="term" value="P:maintenance of translational fidelity"/>
    <property type="evidence" value="ECO:0000314"/>
    <property type="project" value="SGD"/>
</dbReference>
<dbReference type="GO" id="GO:0030490">
    <property type="term" value="P:maturation of SSU-rRNA"/>
    <property type="evidence" value="ECO:0000315"/>
    <property type="project" value="SGD"/>
</dbReference>
<dbReference type="GO" id="GO:0000028">
    <property type="term" value="P:ribosomal small subunit assembly"/>
    <property type="evidence" value="ECO:0000315"/>
    <property type="project" value="SGD"/>
</dbReference>
<dbReference type="GO" id="GO:0042274">
    <property type="term" value="P:ribosomal small subunit biogenesis"/>
    <property type="evidence" value="ECO:0000318"/>
    <property type="project" value="GO_Central"/>
</dbReference>
<dbReference type="FunFam" id="3.30.1330.30:FF:000019">
    <property type="entry name" value="40S ribosomal protein S12"/>
    <property type="match status" value="1"/>
</dbReference>
<dbReference type="Gene3D" id="3.30.1330.30">
    <property type="match status" value="1"/>
</dbReference>
<dbReference type="InterPro" id="IPR029064">
    <property type="entry name" value="Ribosomal_eL30-like_sf"/>
</dbReference>
<dbReference type="InterPro" id="IPR004038">
    <property type="entry name" value="Ribosomal_eL8/eL30/eS12/Gad45"/>
</dbReference>
<dbReference type="InterPro" id="IPR000530">
    <property type="entry name" value="Ribosomal_eS12"/>
</dbReference>
<dbReference type="InterPro" id="IPR047860">
    <property type="entry name" value="Ribosomal_eS12_CS"/>
</dbReference>
<dbReference type="PANTHER" id="PTHR11843">
    <property type="entry name" value="40S RIBOSOMAL PROTEIN S12"/>
    <property type="match status" value="1"/>
</dbReference>
<dbReference type="Pfam" id="PF01248">
    <property type="entry name" value="Ribosomal_L7Ae"/>
    <property type="match status" value="1"/>
</dbReference>
<dbReference type="PRINTS" id="PR00972">
    <property type="entry name" value="RIBSOMALS12E"/>
</dbReference>
<dbReference type="SUPFAM" id="SSF55315">
    <property type="entry name" value="L30e-like"/>
    <property type="match status" value="1"/>
</dbReference>
<dbReference type="PROSITE" id="PS01189">
    <property type="entry name" value="RIBOSOMAL_S12E"/>
    <property type="match status" value="1"/>
</dbReference>